<dbReference type="EMBL" id="CP000653">
    <property type="protein sequence ID" value="ABP60749.1"/>
    <property type="molecule type" value="Genomic_DNA"/>
</dbReference>
<dbReference type="RefSeq" id="WP_012017464.1">
    <property type="nucleotide sequence ID" value="NC_009436.1"/>
</dbReference>
<dbReference type="STRING" id="399742.Ent638_2073"/>
<dbReference type="KEGG" id="ent:Ent638_2073"/>
<dbReference type="eggNOG" id="COG2076">
    <property type="taxonomic scope" value="Bacteria"/>
</dbReference>
<dbReference type="HOGENOM" id="CLU_131462_1_0_6"/>
<dbReference type="OrthoDB" id="5592809at2"/>
<dbReference type="UniPathway" id="UPA00030"/>
<dbReference type="Proteomes" id="UP000000230">
    <property type="component" value="Chromosome"/>
</dbReference>
<dbReference type="GO" id="GO:0005886">
    <property type="term" value="C:plasma membrane"/>
    <property type="evidence" value="ECO:0007669"/>
    <property type="project" value="UniProtKB-SubCell"/>
</dbReference>
<dbReference type="GO" id="GO:1901505">
    <property type="term" value="F:carbohydrate derivative transmembrane transporter activity"/>
    <property type="evidence" value="ECO:0007669"/>
    <property type="project" value="InterPro"/>
</dbReference>
<dbReference type="GO" id="GO:0009245">
    <property type="term" value="P:lipid A biosynthetic process"/>
    <property type="evidence" value="ECO:0007669"/>
    <property type="project" value="UniProtKB-UniRule"/>
</dbReference>
<dbReference type="GO" id="GO:0009103">
    <property type="term" value="P:lipopolysaccharide biosynthetic process"/>
    <property type="evidence" value="ECO:0007669"/>
    <property type="project" value="UniProtKB-UniRule"/>
</dbReference>
<dbReference type="Gene3D" id="1.10.3730.20">
    <property type="match status" value="1"/>
</dbReference>
<dbReference type="HAMAP" id="MF_00538">
    <property type="entry name" value="Flippase_ArnF"/>
    <property type="match status" value="1"/>
</dbReference>
<dbReference type="InterPro" id="IPR022832">
    <property type="entry name" value="Flippase_ArnF"/>
</dbReference>
<dbReference type="InterPro" id="IPR000390">
    <property type="entry name" value="Small_drug/metabolite_transptr"/>
</dbReference>
<dbReference type="NCBIfam" id="NF002816">
    <property type="entry name" value="PRK02971.1-2"/>
    <property type="match status" value="1"/>
</dbReference>
<dbReference type="PANTHER" id="PTHR30561:SF9">
    <property type="entry name" value="4-AMINO-4-DEOXY-L-ARABINOSE-PHOSPHOUNDECAPRENOL FLIPPASE SUBUNIT ARNF-RELATED"/>
    <property type="match status" value="1"/>
</dbReference>
<dbReference type="PANTHER" id="PTHR30561">
    <property type="entry name" value="SMR FAMILY PROTON-DEPENDENT DRUG EFFLUX TRANSPORTER SUGE"/>
    <property type="match status" value="1"/>
</dbReference>
<dbReference type="SUPFAM" id="SSF103481">
    <property type="entry name" value="Multidrug resistance efflux transporter EmrE"/>
    <property type="match status" value="1"/>
</dbReference>
<comment type="function">
    <text evidence="1">Translocates 4-amino-4-deoxy-L-arabinose-phosphoundecaprenol (alpha-L-Ara4N-phosphoundecaprenol) from the cytoplasmic to the periplasmic side of the inner membrane.</text>
</comment>
<comment type="pathway">
    <text evidence="1">Bacterial outer membrane biogenesis; lipopolysaccharide biosynthesis.</text>
</comment>
<comment type="subunit">
    <text evidence="1">Heterodimer of ArnE and ArnF.</text>
</comment>
<comment type="subcellular location">
    <subcellularLocation>
        <location evidence="1">Cell inner membrane</location>
        <topology evidence="1">Multi-pass membrane protein</topology>
    </subcellularLocation>
</comment>
<comment type="similarity">
    <text evidence="1">Belongs to the ArnF family.</text>
</comment>
<keyword id="KW-0997">Cell inner membrane</keyword>
<keyword id="KW-1003">Cell membrane</keyword>
<keyword id="KW-0441">Lipid A biosynthesis</keyword>
<keyword id="KW-0444">Lipid biosynthesis</keyword>
<keyword id="KW-0443">Lipid metabolism</keyword>
<keyword id="KW-0448">Lipopolysaccharide biosynthesis</keyword>
<keyword id="KW-0472">Membrane</keyword>
<keyword id="KW-0812">Transmembrane</keyword>
<keyword id="KW-1133">Transmembrane helix</keyword>
<keyword id="KW-0813">Transport</keyword>
<gene>
    <name evidence="1" type="primary">arnF</name>
    <name type="ordered locus">Ent638_2073</name>
</gene>
<reference key="1">
    <citation type="journal article" date="2010" name="PLoS Genet.">
        <title>Genome sequence of the plant growth promoting endophytic bacterium Enterobacter sp. 638.</title>
        <authorList>
            <person name="Taghavi S."/>
            <person name="van der Lelie D."/>
            <person name="Hoffman A."/>
            <person name="Zhang Y.B."/>
            <person name="Walla M.D."/>
            <person name="Vangronsveld J."/>
            <person name="Newman L."/>
            <person name="Monchy S."/>
        </authorList>
    </citation>
    <scope>NUCLEOTIDE SEQUENCE [LARGE SCALE GENOMIC DNA]</scope>
    <source>
        <strain>638</strain>
    </source>
</reference>
<protein>
    <recommendedName>
        <fullName evidence="1">Probable 4-amino-4-deoxy-L-arabinose-phosphoundecaprenol flippase subunit ArnF</fullName>
        <shortName evidence="1">L-Ara4N-phosphoundecaprenol flippase subunit ArnF</shortName>
    </recommendedName>
    <alternativeName>
        <fullName evidence="1">Undecaprenyl phosphate-aminoarabinose flippase subunit ArnF</fullName>
    </alternativeName>
</protein>
<proteinExistence type="inferred from homology"/>
<name>ARNF_ENT38</name>
<organism>
    <name type="scientific">Enterobacter sp. (strain 638)</name>
    <dbReference type="NCBI Taxonomy" id="399742"/>
    <lineage>
        <taxon>Bacteria</taxon>
        <taxon>Pseudomonadati</taxon>
        <taxon>Pseudomonadota</taxon>
        <taxon>Gammaproteobacteria</taxon>
        <taxon>Enterobacterales</taxon>
        <taxon>Enterobacteriaceae</taxon>
        <taxon>Enterobacter</taxon>
    </lineage>
</organism>
<feature type="chain" id="PRO_0000381996" description="Probable 4-amino-4-deoxy-L-arabinose-phosphoundecaprenol flippase subunit ArnF">
    <location>
        <begin position="1"/>
        <end position="127"/>
    </location>
</feature>
<feature type="transmembrane region" description="Helical" evidence="1">
    <location>
        <begin position="1"/>
        <end position="21"/>
    </location>
</feature>
<feature type="topological domain" description="Periplasmic" evidence="1">
    <location>
        <begin position="22"/>
        <end position="48"/>
    </location>
</feature>
<feature type="transmembrane region" description="Helical" evidence="1">
    <location>
        <begin position="49"/>
        <end position="69"/>
    </location>
</feature>
<feature type="topological domain" description="Cytoplasmic" evidence="1">
    <location>
        <begin position="70"/>
        <end position="77"/>
    </location>
</feature>
<feature type="transmembrane region" description="Helical" evidence="1">
    <location>
        <begin position="78"/>
        <end position="98"/>
    </location>
</feature>
<feature type="topological domain" description="Periplasmic" evidence="1">
    <location>
        <begin position="99"/>
        <end position="101"/>
    </location>
</feature>
<feature type="transmembrane region" description="Helical" evidence="1">
    <location>
        <begin position="102"/>
        <end position="122"/>
    </location>
</feature>
<feature type="topological domain" description="Cytoplasmic" evidence="1">
    <location>
        <begin position="123"/>
        <end position="127"/>
    </location>
</feature>
<evidence type="ECO:0000255" key="1">
    <source>
        <dbReference type="HAMAP-Rule" id="MF_00538"/>
    </source>
</evidence>
<sequence length="127" mass="13752">MMGYFWALMSVLLVSGAQLMMKWAMVSLPPVGQTDALMSAFMSVTPGAVALVIGLFAYVFSMGCWYMALRRIALSKAYPLLSLSYVLVWAAAIGLPWLHEPFSVGKLAGVSVIFVGLLLVCLPDKKS</sequence>
<accession>A4WAL9</accession>